<sequence length="379" mass="42800">MTNTRKSHPLMKILNHSFIDLPTPPNISSWWNFGSLLGACLAVQIITGLFLAMHYTADTMTAFSSVTHICRDVNYGWIIRYMHANGASMFFTCLFIHVGRGLYYGSFTLTETWNIGIILLFSVMATAFMGYVLPWGQMSFWGATVITNLLSAIPYIGTNLVEWIWGGFSVDKATLTRFFAFHFILPFIISALVMVHLLFLHETGSNNPLGLKSNSDKIPFHPYYTIKDLLGLLLLLMLLMMLVLFHPDLLGDPDNYSPANPLNTPPHIKPEWYFLFAYAILRSIPNKLGGVLALATSILILAIIPMLQTTKQQSMVFRPLSQTLFWILVSDLFILTWIGGQPVEYPFIIIGQSASILYFSLILILMPTANLIENNMLKW</sequence>
<keyword id="KW-0249">Electron transport</keyword>
<keyword id="KW-0349">Heme</keyword>
<keyword id="KW-0408">Iron</keyword>
<keyword id="KW-0472">Membrane</keyword>
<keyword id="KW-0479">Metal-binding</keyword>
<keyword id="KW-0496">Mitochondrion</keyword>
<keyword id="KW-0999">Mitochondrion inner membrane</keyword>
<keyword id="KW-0679">Respiratory chain</keyword>
<keyword id="KW-0812">Transmembrane</keyword>
<keyword id="KW-1133">Transmembrane helix</keyword>
<keyword id="KW-0813">Transport</keyword>
<keyword id="KW-0830">Ubiquinone</keyword>
<protein>
    <recommendedName>
        <fullName>Cytochrome b</fullName>
    </recommendedName>
    <alternativeName>
        <fullName>Complex III subunit 3</fullName>
    </alternativeName>
    <alternativeName>
        <fullName>Complex III subunit III</fullName>
    </alternativeName>
    <alternativeName>
        <fullName>Cytochrome b-c1 complex subunit 3</fullName>
    </alternativeName>
    <alternativeName>
        <fullName>Ubiquinol-cytochrome-c reductase complex cytochrome b subunit</fullName>
    </alternativeName>
</protein>
<dbReference type="EMBL" id="AY441456">
    <property type="protein sequence ID" value="AAS00137.1"/>
    <property type="molecule type" value="Genomic_DNA"/>
</dbReference>
<dbReference type="SMR" id="Q5VJ57"/>
<dbReference type="GO" id="GO:0005743">
    <property type="term" value="C:mitochondrial inner membrane"/>
    <property type="evidence" value="ECO:0007669"/>
    <property type="project" value="UniProtKB-SubCell"/>
</dbReference>
<dbReference type="GO" id="GO:0045275">
    <property type="term" value="C:respiratory chain complex III"/>
    <property type="evidence" value="ECO:0007669"/>
    <property type="project" value="InterPro"/>
</dbReference>
<dbReference type="GO" id="GO:0046872">
    <property type="term" value="F:metal ion binding"/>
    <property type="evidence" value="ECO:0007669"/>
    <property type="project" value="UniProtKB-KW"/>
</dbReference>
<dbReference type="GO" id="GO:0008121">
    <property type="term" value="F:ubiquinol-cytochrome-c reductase activity"/>
    <property type="evidence" value="ECO:0007669"/>
    <property type="project" value="InterPro"/>
</dbReference>
<dbReference type="GO" id="GO:0006122">
    <property type="term" value="P:mitochondrial electron transport, ubiquinol to cytochrome c"/>
    <property type="evidence" value="ECO:0007669"/>
    <property type="project" value="TreeGrafter"/>
</dbReference>
<dbReference type="CDD" id="cd00290">
    <property type="entry name" value="cytochrome_b_C"/>
    <property type="match status" value="1"/>
</dbReference>
<dbReference type="CDD" id="cd00284">
    <property type="entry name" value="Cytochrome_b_N"/>
    <property type="match status" value="1"/>
</dbReference>
<dbReference type="FunFam" id="1.20.810.10:FF:000002">
    <property type="entry name" value="Cytochrome b"/>
    <property type="match status" value="1"/>
</dbReference>
<dbReference type="Gene3D" id="1.20.810.10">
    <property type="entry name" value="Cytochrome Bc1 Complex, Chain C"/>
    <property type="match status" value="1"/>
</dbReference>
<dbReference type="InterPro" id="IPR005798">
    <property type="entry name" value="Cyt_b/b6_C"/>
</dbReference>
<dbReference type="InterPro" id="IPR036150">
    <property type="entry name" value="Cyt_b/b6_C_sf"/>
</dbReference>
<dbReference type="InterPro" id="IPR005797">
    <property type="entry name" value="Cyt_b/b6_N"/>
</dbReference>
<dbReference type="InterPro" id="IPR027387">
    <property type="entry name" value="Cytb/b6-like_sf"/>
</dbReference>
<dbReference type="InterPro" id="IPR030689">
    <property type="entry name" value="Cytochrome_b"/>
</dbReference>
<dbReference type="InterPro" id="IPR048260">
    <property type="entry name" value="Cytochrome_b_C_euk/bac"/>
</dbReference>
<dbReference type="InterPro" id="IPR048259">
    <property type="entry name" value="Cytochrome_b_N_euk/bac"/>
</dbReference>
<dbReference type="InterPro" id="IPR016174">
    <property type="entry name" value="Di-haem_cyt_TM"/>
</dbReference>
<dbReference type="PANTHER" id="PTHR19271">
    <property type="entry name" value="CYTOCHROME B"/>
    <property type="match status" value="1"/>
</dbReference>
<dbReference type="PANTHER" id="PTHR19271:SF16">
    <property type="entry name" value="CYTOCHROME B"/>
    <property type="match status" value="1"/>
</dbReference>
<dbReference type="Pfam" id="PF00032">
    <property type="entry name" value="Cytochrom_B_C"/>
    <property type="match status" value="1"/>
</dbReference>
<dbReference type="Pfam" id="PF00033">
    <property type="entry name" value="Cytochrome_B"/>
    <property type="match status" value="1"/>
</dbReference>
<dbReference type="PIRSF" id="PIRSF038885">
    <property type="entry name" value="COB"/>
    <property type="match status" value="1"/>
</dbReference>
<dbReference type="SUPFAM" id="SSF81648">
    <property type="entry name" value="a domain/subunit of cytochrome bc1 complex (Ubiquinol-cytochrome c reductase)"/>
    <property type="match status" value="1"/>
</dbReference>
<dbReference type="SUPFAM" id="SSF81342">
    <property type="entry name" value="Transmembrane di-heme cytochromes"/>
    <property type="match status" value="1"/>
</dbReference>
<dbReference type="PROSITE" id="PS51003">
    <property type="entry name" value="CYTB_CTER"/>
    <property type="match status" value="1"/>
</dbReference>
<dbReference type="PROSITE" id="PS51002">
    <property type="entry name" value="CYTB_NTER"/>
    <property type="match status" value="1"/>
</dbReference>
<comment type="function">
    <text evidence="2">Component of the ubiquinol-cytochrome c reductase complex (complex III or cytochrome b-c1 complex) that is part of the mitochondrial respiratory chain. The b-c1 complex mediates electron transfer from ubiquinol to cytochrome c. Contributes to the generation of a proton gradient across the mitochondrial membrane that is then used for ATP synthesis.</text>
</comment>
<comment type="cofactor">
    <cofactor evidence="2">
        <name>heme b</name>
        <dbReference type="ChEBI" id="CHEBI:60344"/>
    </cofactor>
    <text evidence="2">Binds 2 heme b groups non-covalently.</text>
</comment>
<comment type="subunit">
    <text evidence="2">The cytochrome bc1 complex contains 11 subunits: 3 respiratory subunits (MT-CYB, CYC1 and UQCRFS1), 2 core proteins (UQCRC1 and UQCRC2) and 6 low-molecular weight proteins (UQCRH/QCR6, UQCRB/QCR7, UQCRQ/QCR8, UQCR10/QCR9, UQCR11/QCR10 and a cleavage product of UQCRFS1). This cytochrome bc1 complex then forms a dimer.</text>
</comment>
<comment type="subcellular location">
    <subcellularLocation>
        <location evidence="2">Mitochondrion inner membrane</location>
        <topology evidence="2">Multi-pass membrane protein</topology>
    </subcellularLocation>
</comment>
<comment type="miscellaneous">
    <text evidence="1">Heme 1 (or BL or b562) is low-potential and absorbs at about 562 nm, and heme 2 (or BH or b566) is high-potential and absorbs at about 566 nm.</text>
</comment>
<comment type="similarity">
    <text evidence="3 4">Belongs to the cytochrome b family.</text>
</comment>
<comment type="caution">
    <text evidence="2">The full-length protein contains only eight transmembrane helices, not nine as predicted by bioinformatics tools.</text>
</comment>
<feature type="chain" id="PRO_0000061384" description="Cytochrome b">
    <location>
        <begin position="1"/>
        <end position="379"/>
    </location>
</feature>
<feature type="transmembrane region" description="Helical" evidence="2">
    <location>
        <begin position="33"/>
        <end position="53"/>
    </location>
</feature>
<feature type="transmembrane region" description="Helical" evidence="2">
    <location>
        <begin position="77"/>
        <end position="98"/>
    </location>
</feature>
<feature type="transmembrane region" description="Helical" evidence="2">
    <location>
        <begin position="113"/>
        <end position="133"/>
    </location>
</feature>
<feature type="transmembrane region" description="Helical" evidence="2">
    <location>
        <begin position="178"/>
        <end position="198"/>
    </location>
</feature>
<feature type="transmembrane region" description="Helical" evidence="2">
    <location>
        <begin position="226"/>
        <end position="246"/>
    </location>
</feature>
<feature type="transmembrane region" description="Helical" evidence="2">
    <location>
        <begin position="288"/>
        <end position="308"/>
    </location>
</feature>
<feature type="transmembrane region" description="Helical" evidence="2">
    <location>
        <begin position="320"/>
        <end position="340"/>
    </location>
</feature>
<feature type="transmembrane region" description="Helical" evidence="2">
    <location>
        <begin position="347"/>
        <end position="367"/>
    </location>
</feature>
<feature type="binding site" description="axial binding residue" evidence="2">
    <location>
        <position position="83"/>
    </location>
    <ligand>
        <name>heme b</name>
        <dbReference type="ChEBI" id="CHEBI:60344"/>
        <label>b562</label>
    </ligand>
    <ligandPart>
        <name>Fe</name>
        <dbReference type="ChEBI" id="CHEBI:18248"/>
    </ligandPart>
</feature>
<feature type="binding site" description="axial binding residue" evidence="2">
    <location>
        <position position="97"/>
    </location>
    <ligand>
        <name>heme b</name>
        <dbReference type="ChEBI" id="CHEBI:60344"/>
        <label>b566</label>
    </ligand>
    <ligandPart>
        <name>Fe</name>
        <dbReference type="ChEBI" id="CHEBI:18248"/>
    </ligandPart>
</feature>
<feature type="binding site" description="axial binding residue" evidence="2">
    <location>
        <position position="182"/>
    </location>
    <ligand>
        <name>heme b</name>
        <dbReference type="ChEBI" id="CHEBI:60344"/>
        <label>b562</label>
    </ligand>
    <ligandPart>
        <name>Fe</name>
        <dbReference type="ChEBI" id="CHEBI:18248"/>
    </ligandPart>
</feature>
<feature type="binding site" description="axial binding residue" evidence="2">
    <location>
        <position position="196"/>
    </location>
    <ligand>
        <name>heme b</name>
        <dbReference type="ChEBI" id="CHEBI:60344"/>
        <label>b566</label>
    </ligand>
    <ligandPart>
        <name>Fe</name>
        <dbReference type="ChEBI" id="CHEBI:18248"/>
    </ligandPart>
</feature>
<feature type="binding site" evidence="2">
    <location>
        <position position="201"/>
    </location>
    <ligand>
        <name>a ubiquinone</name>
        <dbReference type="ChEBI" id="CHEBI:16389"/>
    </ligand>
</feature>
<accession>Q5VJ57</accession>
<reference key="1">
    <citation type="submission" date="2003-10" db="EMBL/GenBank/DDBJ databases">
        <title>61 primate SINEs and the evolution of strepsirrhines.</title>
        <authorList>
            <person name="Roos C."/>
            <person name="Schmitz J."/>
            <person name="Zischler H."/>
        </authorList>
    </citation>
    <scope>NUCLEOTIDE SEQUENCE [GENOMIC DNA]</scope>
</reference>
<geneLocation type="mitochondrion"/>
<organism>
    <name type="scientific">Phaner furcifer</name>
    <name type="common">Fork-marked lemur</name>
    <dbReference type="NCBI Taxonomy" id="261734"/>
    <lineage>
        <taxon>Eukaryota</taxon>
        <taxon>Metazoa</taxon>
        <taxon>Chordata</taxon>
        <taxon>Craniata</taxon>
        <taxon>Vertebrata</taxon>
        <taxon>Euteleostomi</taxon>
        <taxon>Mammalia</taxon>
        <taxon>Eutheria</taxon>
        <taxon>Euarchontoglires</taxon>
        <taxon>Primates</taxon>
        <taxon>Strepsirrhini</taxon>
        <taxon>Lemuriformes</taxon>
        <taxon>Cheirogaleidae</taxon>
        <taxon>Phaner</taxon>
    </lineage>
</organism>
<name>CYB_PHAFU</name>
<proteinExistence type="inferred from homology"/>
<gene>
    <name type="primary">MT-CYB</name>
    <name type="synonym">COB</name>
    <name type="synonym">CYTB</name>
    <name type="synonym">MTCYB</name>
</gene>
<evidence type="ECO:0000250" key="1"/>
<evidence type="ECO:0000250" key="2">
    <source>
        <dbReference type="UniProtKB" id="P00157"/>
    </source>
</evidence>
<evidence type="ECO:0000255" key="3">
    <source>
        <dbReference type="PROSITE-ProRule" id="PRU00967"/>
    </source>
</evidence>
<evidence type="ECO:0000255" key="4">
    <source>
        <dbReference type="PROSITE-ProRule" id="PRU00968"/>
    </source>
</evidence>